<dbReference type="EC" id="2.7.4.9" evidence="1"/>
<dbReference type="EMBL" id="AE015450">
    <property type="protein sequence ID" value="AAP57071.2"/>
    <property type="molecule type" value="Genomic_DNA"/>
</dbReference>
<dbReference type="RefSeq" id="WP_011113984.1">
    <property type="nucleotide sequence ID" value="NC_004829.2"/>
</dbReference>
<dbReference type="SMR" id="Q7NAD7"/>
<dbReference type="GeneID" id="93510561"/>
<dbReference type="KEGG" id="mga:MGA_0606"/>
<dbReference type="PATRIC" id="fig|233150.7.peg.811"/>
<dbReference type="HOGENOM" id="CLU_049131_0_2_14"/>
<dbReference type="OrthoDB" id="9774907at2"/>
<dbReference type="Proteomes" id="UP000001418">
    <property type="component" value="Chromosome"/>
</dbReference>
<dbReference type="GO" id="GO:0005829">
    <property type="term" value="C:cytosol"/>
    <property type="evidence" value="ECO:0007669"/>
    <property type="project" value="TreeGrafter"/>
</dbReference>
<dbReference type="GO" id="GO:0005524">
    <property type="term" value="F:ATP binding"/>
    <property type="evidence" value="ECO:0007669"/>
    <property type="project" value="UniProtKB-UniRule"/>
</dbReference>
<dbReference type="GO" id="GO:0004798">
    <property type="term" value="F:dTMP kinase activity"/>
    <property type="evidence" value="ECO:0007669"/>
    <property type="project" value="UniProtKB-UniRule"/>
</dbReference>
<dbReference type="GO" id="GO:0006233">
    <property type="term" value="P:dTDP biosynthetic process"/>
    <property type="evidence" value="ECO:0007669"/>
    <property type="project" value="InterPro"/>
</dbReference>
<dbReference type="GO" id="GO:0006235">
    <property type="term" value="P:dTTP biosynthetic process"/>
    <property type="evidence" value="ECO:0007669"/>
    <property type="project" value="UniProtKB-UniRule"/>
</dbReference>
<dbReference type="GO" id="GO:0006227">
    <property type="term" value="P:dUDP biosynthetic process"/>
    <property type="evidence" value="ECO:0007669"/>
    <property type="project" value="TreeGrafter"/>
</dbReference>
<dbReference type="CDD" id="cd01672">
    <property type="entry name" value="TMPK"/>
    <property type="match status" value="1"/>
</dbReference>
<dbReference type="FunFam" id="3.40.50.300:FF:000225">
    <property type="entry name" value="Thymidylate kinase"/>
    <property type="match status" value="1"/>
</dbReference>
<dbReference type="Gene3D" id="3.40.50.300">
    <property type="entry name" value="P-loop containing nucleotide triphosphate hydrolases"/>
    <property type="match status" value="1"/>
</dbReference>
<dbReference type="HAMAP" id="MF_00165">
    <property type="entry name" value="Thymidylate_kinase"/>
    <property type="match status" value="1"/>
</dbReference>
<dbReference type="InterPro" id="IPR027417">
    <property type="entry name" value="P-loop_NTPase"/>
</dbReference>
<dbReference type="InterPro" id="IPR039430">
    <property type="entry name" value="Thymidylate_kin-like_dom"/>
</dbReference>
<dbReference type="InterPro" id="IPR018094">
    <property type="entry name" value="Thymidylate_kinase"/>
</dbReference>
<dbReference type="NCBIfam" id="TIGR00041">
    <property type="entry name" value="DTMP_kinase"/>
    <property type="match status" value="1"/>
</dbReference>
<dbReference type="PANTHER" id="PTHR10344">
    <property type="entry name" value="THYMIDYLATE KINASE"/>
    <property type="match status" value="1"/>
</dbReference>
<dbReference type="PANTHER" id="PTHR10344:SF4">
    <property type="entry name" value="UMP-CMP KINASE 2, MITOCHONDRIAL"/>
    <property type="match status" value="1"/>
</dbReference>
<dbReference type="Pfam" id="PF02223">
    <property type="entry name" value="Thymidylate_kin"/>
    <property type="match status" value="1"/>
</dbReference>
<dbReference type="SUPFAM" id="SSF52540">
    <property type="entry name" value="P-loop containing nucleoside triphosphate hydrolases"/>
    <property type="match status" value="1"/>
</dbReference>
<feature type="chain" id="PRO_0000155301" description="Thymidylate kinase">
    <location>
        <begin position="1"/>
        <end position="210"/>
    </location>
</feature>
<feature type="binding site" evidence="1">
    <location>
        <begin position="11"/>
        <end position="18"/>
    </location>
    <ligand>
        <name>ATP</name>
        <dbReference type="ChEBI" id="CHEBI:30616"/>
    </ligand>
</feature>
<organism>
    <name type="scientific">Mycoplasmoides gallisepticum (strain R(low / passage 15 / clone 2))</name>
    <name type="common">Mycoplasma gallisepticum</name>
    <dbReference type="NCBI Taxonomy" id="710127"/>
    <lineage>
        <taxon>Bacteria</taxon>
        <taxon>Bacillati</taxon>
        <taxon>Mycoplasmatota</taxon>
        <taxon>Mycoplasmoidales</taxon>
        <taxon>Mycoplasmoidaceae</taxon>
        <taxon>Mycoplasmoides</taxon>
    </lineage>
</organism>
<protein>
    <recommendedName>
        <fullName evidence="1">Thymidylate kinase</fullName>
        <ecNumber evidence="1">2.7.4.9</ecNumber>
    </recommendedName>
    <alternativeName>
        <fullName evidence="1">dTMP kinase</fullName>
    </alternativeName>
</protein>
<keyword id="KW-0067">ATP-binding</keyword>
<keyword id="KW-0418">Kinase</keyword>
<keyword id="KW-0545">Nucleotide biosynthesis</keyword>
<keyword id="KW-0547">Nucleotide-binding</keyword>
<keyword id="KW-1185">Reference proteome</keyword>
<keyword id="KW-0808">Transferase</keyword>
<sequence>MKKGVFIVIEGVDGSGKSSFLKRMMNEHTMINSQPIIYSREPGGCDTSEAVRELIMKLSNSDPLTEALLFCASRNEHLKKKILPALNENKIAICDRFVVSSWIYQGLIKNAGYEKVKKINEYVTDGLEPDLTILFDVDPEIAAKRISERSTMNHLDAYTKERINKIRNAYLERLKDNKKAKIINASLDLDTVYDQVVNIITLFVKNHELN</sequence>
<evidence type="ECO:0000255" key="1">
    <source>
        <dbReference type="HAMAP-Rule" id="MF_00165"/>
    </source>
</evidence>
<comment type="function">
    <text evidence="1">Phosphorylation of dTMP to form dTDP in both de novo and salvage pathways of dTTP synthesis.</text>
</comment>
<comment type="catalytic activity">
    <reaction evidence="1">
        <text>dTMP + ATP = dTDP + ADP</text>
        <dbReference type="Rhea" id="RHEA:13517"/>
        <dbReference type="ChEBI" id="CHEBI:30616"/>
        <dbReference type="ChEBI" id="CHEBI:58369"/>
        <dbReference type="ChEBI" id="CHEBI:63528"/>
        <dbReference type="ChEBI" id="CHEBI:456216"/>
        <dbReference type="EC" id="2.7.4.9"/>
    </reaction>
</comment>
<comment type="similarity">
    <text evidence="1">Belongs to the thymidylate kinase family.</text>
</comment>
<proteinExistence type="inferred from homology"/>
<gene>
    <name evidence="1" type="primary">tmk</name>
    <name type="ordered locus">MYCGA7210</name>
    <name type="ORF">MGA_0606</name>
</gene>
<reference key="1">
    <citation type="journal article" date="2003" name="Microbiology">
        <title>The complete genome sequence of the avian pathogen Mycoplasma gallisepticum strain R(low).</title>
        <authorList>
            <person name="Papazisi L."/>
            <person name="Gorton T.S."/>
            <person name="Kutish G."/>
            <person name="Markham P.F."/>
            <person name="Browning G.F."/>
            <person name="Nguyen D.K."/>
            <person name="Swartzell S."/>
            <person name="Madan A."/>
            <person name="Mahairas G."/>
            <person name="Geary S.J."/>
        </authorList>
    </citation>
    <scope>NUCLEOTIDE SEQUENCE [LARGE SCALE GENOMIC DNA]</scope>
    <source>
        <strain>R(low / passage 15 / clone 2)</strain>
    </source>
</reference>
<name>KTHY_MYCGA</name>
<accession>Q7NAD7</accession>